<keyword id="KW-0007">Acetylation</keyword>
<keyword id="KW-0009">Actin-binding</keyword>
<keyword id="KW-1003">Cell membrane</keyword>
<keyword id="KW-1017">Isopeptide bond</keyword>
<keyword id="KW-0472">Membrane</keyword>
<keyword id="KW-0488">Methylation</keyword>
<keyword id="KW-0597">Phosphoprotein</keyword>
<keyword id="KW-1185">Reference proteome</keyword>
<keyword id="KW-0832">Ubl conjugation</keyword>
<sequence length="472" mass="51273">MADMRNLVERLERVVGRLEAVSHASDTHCGYGDSAAKAGTTPYVQAFDSLLAGPVAEYLKISKEIGGDVQKHAEMVHTGLKLERALLVTASQCQQPAGNKLSDLLAPISEQIQEVVTFREKNRGSKLFNHLSAVSESIQALGWVAMAPKPGPYVKEMNDAAMFYTNRVLKEYKDVDKKHVDWVKAYLSIWTELQAYIKEFHTTGLAWSRTGPVAKELSGLPSGPSAGSGPPPPPPGPPPPPVPTSSGSDDSASRSALFAQINQGESITHALKHVSDDMKTHKNPALKAQSGLIRSGPKPFSASKPDPPKPVAKKEPALLELEGKKWRVENQENVSNLMIEDTELKQVAYIFKCVNSTLQIKGKINSITVDNCKKLGLVFDDVVGIVEIINSKDVKVQVMGKVPTISINKTDGCHVYLSKNSLDCEIVSAKSSEMNVLIPTEGGDFNEFPVPEQFKTLWNGQKLVTTVTEIAG</sequence>
<organism>
    <name type="scientific">Bos taurus</name>
    <name type="common">Bovine</name>
    <dbReference type="NCBI Taxonomy" id="9913"/>
    <lineage>
        <taxon>Eukaryota</taxon>
        <taxon>Metazoa</taxon>
        <taxon>Chordata</taxon>
        <taxon>Craniata</taxon>
        <taxon>Vertebrata</taxon>
        <taxon>Euteleostomi</taxon>
        <taxon>Mammalia</taxon>
        <taxon>Eutheria</taxon>
        <taxon>Laurasiatheria</taxon>
        <taxon>Artiodactyla</taxon>
        <taxon>Ruminantia</taxon>
        <taxon>Pecora</taxon>
        <taxon>Bovidae</taxon>
        <taxon>Bovinae</taxon>
        <taxon>Bos</taxon>
    </lineage>
</organism>
<proteinExistence type="evidence at transcript level"/>
<name>CAP1_BOVIN</name>
<accession>Q3SYV4</accession>
<gene>
    <name type="primary">CAP1</name>
</gene>
<comment type="function">
    <text evidence="1">Directly regulates filament dynamics and has been implicated in a number of complex developmental and morphological processes, including mRNA localization and the establishment of cell polarity.</text>
</comment>
<comment type="subunit">
    <text evidence="1">Homodimer. Binds actin monomers (By similarity).</text>
</comment>
<comment type="subcellular location">
    <subcellularLocation>
        <location evidence="1">Cell membrane</location>
        <topology evidence="1">Peripheral membrane protein</topology>
    </subcellularLocation>
</comment>
<comment type="similarity">
    <text evidence="6">Belongs to the CAP family.</text>
</comment>
<protein>
    <recommendedName>
        <fullName>Adenylyl cyclase-associated protein 1</fullName>
        <shortName>CAP 1</shortName>
    </recommendedName>
</protein>
<dbReference type="EMBL" id="BC103366">
    <property type="protein sequence ID" value="AAI03367.1"/>
    <property type="molecule type" value="mRNA"/>
</dbReference>
<dbReference type="RefSeq" id="NP_001030182.1">
    <property type="nucleotide sequence ID" value="NM_001035010.2"/>
</dbReference>
<dbReference type="RefSeq" id="XP_005204711.1">
    <property type="nucleotide sequence ID" value="XM_005204654.5"/>
</dbReference>
<dbReference type="RefSeq" id="XP_005204712.1">
    <property type="nucleotide sequence ID" value="XM_005204655.5"/>
</dbReference>
<dbReference type="RefSeq" id="XP_059738289.1">
    <property type="nucleotide sequence ID" value="XM_059882306.1"/>
</dbReference>
<dbReference type="SMR" id="Q3SYV4"/>
<dbReference type="FunCoup" id="Q3SYV4">
    <property type="interactions" value="2554"/>
</dbReference>
<dbReference type="STRING" id="9913.ENSBTAP00000017775"/>
<dbReference type="PaxDb" id="9913-ENSBTAP00000017775"/>
<dbReference type="PeptideAtlas" id="Q3SYV4"/>
<dbReference type="GeneID" id="504519"/>
<dbReference type="KEGG" id="bta:504519"/>
<dbReference type="CTD" id="10487"/>
<dbReference type="eggNOG" id="KOG2675">
    <property type="taxonomic scope" value="Eukaryota"/>
</dbReference>
<dbReference type="HOGENOM" id="CLU_015780_1_1_1"/>
<dbReference type="InParanoid" id="Q3SYV4"/>
<dbReference type="OrthoDB" id="1601at2759"/>
<dbReference type="Proteomes" id="UP000009136">
    <property type="component" value="Unplaced"/>
</dbReference>
<dbReference type="GO" id="GO:0005737">
    <property type="term" value="C:cytoplasm"/>
    <property type="evidence" value="ECO:0000318"/>
    <property type="project" value="GO_Central"/>
</dbReference>
<dbReference type="GO" id="GO:0005886">
    <property type="term" value="C:plasma membrane"/>
    <property type="evidence" value="ECO:0007669"/>
    <property type="project" value="UniProtKB-SubCell"/>
</dbReference>
<dbReference type="GO" id="GO:0003779">
    <property type="term" value="F:actin binding"/>
    <property type="evidence" value="ECO:0000318"/>
    <property type="project" value="GO_Central"/>
</dbReference>
<dbReference type="GO" id="GO:0008179">
    <property type="term" value="F:adenylate cyclase binding"/>
    <property type="evidence" value="ECO:0000318"/>
    <property type="project" value="GO_Central"/>
</dbReference>
<dbReference type="GO" id="GO:0007015">
    <property type="term" value="P:actin filament organization"/>
    <property type="evidence" value="ECO:0000318"/>
    <property type="project" value="GO_Central"/>
</dbReference>
<dbReference type="GO" id="GO:0019933">
    <property type="term" value="P:cAMP-mediated signaling"/>
    <property type="evidence" value="ECO:0000318"/>
    <property type="project" value="GO_Central"/>
</dbReference>
<dbReference type="GO" id="GO:0000902">
    <property type="term" value="P:cell morphogenesis"/>
    <property type="evidence" value="ECO:0000318"/>
    <property type="project" value="GO_Central"/>
</dbReference>
<dbReference type="FunFam" id="1.25.40.330:FF:000001">
    <property type="entry name" value="Adenylyl cyclase-associated protein"/>
    <property type="match status" value="1"/>
</dbReference>
<dbReference type="FunFam" id="2.160.20.70:FF:000001">
    <property type="entry name" value="Adenylyl cyclase-associated protein"/>
    <property type="match status" value="1"/>
</dbReference>
<dbReference type="Gene3D" id="2.160.20.70">
    <property type="match status" value="1"/>
</dbReference>
<dbReference type="Gene3D" id="1.25.40.330">
    <property type="entry name" value="Adenylate cyclase-associated CAP, N-terminal domain"/>
    <property type="match status" value="1"/>
</dbReference>
<dbReference type="InterPro" id="IPR001837">
    <property type="entry name" value="Adenylate_cyclase-assoc_CAP"/>
</dbReference>
<dbReference type="InterPro" id="IPR013912">
    <property type="entry name" value="Adenylate_cyclase-assoc_CAP_C"/>
</dbReference>
<dbReference type="InterPro" id="IPR013992">
    <property type="entry name" value="Adenylate_cyclase-assoc_CAP_N"/>
</dbReference>
<dbReference type="InterPro" id="IPR017901">
    <property type="entry name" value="C-CAP_CF_C-like"/>
</dbReference>
<dbReference type="InterPro" id="IPR016098">
    <property type="entry name" value="CAP/MinC_C"/>
</dbReference>
<dbReference type="InterPro" id="IPR036223">
    <property type="entry name" value="CAP_C_sf"/>
</dbReference>
<dbReference type="InterPro" id="IPR028417">
    <property type="entry name" value="CAP_CS_C"/>
</dbReference>
<dbReference type="InterPro" id="IPR018106">
    <property type="entry name" value="CAP_CS_N"/>
</dbReference>
<dbReference type="InterPro" id="IPR053950">
    <property type="entry name" value="CAP_N"/>
</dbReference>
<dbReference type="InterPro" id="IPR036222">
    <property type="entry name" value="CAP_N_sf"/>
</dbReference>
<dbReference type="InterPro" id="IPR006599">
    <property type="entry name" value="CARP_motif"/>
</dbReference>
<dbReference type="PANTHER" id="PTHR10652">
    <property type="entry name" value="ADENYLYL CYCLASE-ASSOCIATED PROTEIN"/>
    <property type="match status" value="1"/>
</dbReference>
<dbReference type="PANTHER" id="PTHR10652:SF1">
    <property type="entry name" value="ADENYLYL CYCLASE-ASSOCIATED PROTEIN 1"/>
    <property type="match status" value="1"/>
</dbReference>
<dbReference type="Pfam" id="PF08603">
    <property type="entry name" value="CAP_C"/>
    <property type="match status" value="1"/>
</dbReference>
<dbReference type="Pfam" id="PF21938">
    <property type="entry name" value="CAP_N"/>
    <property type="match status" value="1"/>
</dbReference>
<dbReference type="Pfam" id="PF01213">
    <property type="entry name" value="CAP_N-CM"/>
    <property type="match status" value="1"/>
</dbReference>
<dbReference type="SMART" id="SM00673">
    <property type="entry name" value="CARP"/>
    <property type="match status" value="2"/>
</dbReference>
<dbReference type="SUPFAM" id="SSF69340">
    <property type="entry name" value="C-terminal domain of adenylylcyclase associated protein"/>
    <property type="match status" value="1"/>
</dbReference>
<dbReference type="SUPFAM" id="SSF101278">
    <property type="entry name" value="N-terminal domain of adenylylcyclase associated protein, CAP"/>
    <property type="match status" value="1"/>
</dbReference>
<dbReference type="PROSITE" id="PS51329">
    <property type="entry name" value="C_CAP_COFACTOR_C"/>
    <property type="match status" value="1"/>
</dbReference>
<dbReference type="PROSITE" id="PS01088">
    <property type="entry name" value="CAP_1"/>
    <property type="match status" value="1"/>
</dbReference>
<dbReference type="PROSITE" id="PS01089">
    <property type="entry name" value="CAP_2"/>
    <property type="match status" value="1"/>
</dbReference>
<feature type="initiator methionine" description="Removed" evidence="3">
    <location>
        <position position="1"/>
    </location>
</feature>
<feature type="chain" id="PRO_0000271433" description="Adenylyl cyclase-associated protein 1">
    <location>
        <begin position="2"/>
        <end position="472"/>
    </location>
</feature>
<feature type="domain" description="C-CAP/cofactor C-like" evidence="4">
    <location>
        <begin position="307"/>
        <end position="450"/>
    </location>
</feature>
<feature type="region of interest" description="Disordered" evidence="5">
    <location>
        <begin position="216"/>
        <end position="253"/>
    </location>
</feature>
<feature type="region of interest" description="Disordered" evidence="5">
    <location>
        <begin position="290"/>
        <end position="312"/>
    </location>
</feature>
<feature type="compositionally biased region" description="Low complexity" evidence="5">
    <location>
        <begin position="218"/>
        <end position="228"/>
    </location>
</feature>
<feature type="compositionally biased region" description="Pro residues" evidence="5">
    <location>
        <begin position="229"/>
        <end position="243"/>
    </location>
</feature>
<feature type="compositionally biased region" description="Low complexity" evidence="5">
    <location>
        <begin position="244"/>
        <end position="253"/>
    </location>
</feature>
<feature type="modified residue" description="N-acetylalanine" evidence="3">
    <location>
        <position position="2"/>
    </location>
</feature>
<feature type="modified residue" description="Phosphotyrosine" evidence="2">
    <location>
        <position position="31"/>
    </location>
</feature>
<feature type="modified residue" description="Phosphoserine" evidence="3">
    <location>
        <position position="34"/>
    </location>
</feature>
<feature type="modified residue" description="N6-acetyllysine" evidence="3">
    <location>
        <position position="81"/>
    </location>
</feature>
<feature type="modified residue" description="N6-methyllysine" evidence="3">
    <location>
        <position position="287"/>
    </location>
</feature>
<feature type="modified residue" description="Phosphoserine" evidence="3">
    <location>
        <position position="290"/>
    </location>
</feature>
<feature type="modified residue" description="Phosphoserine" evidence="3">
    <location>
        <position position="295"/>
    </location>
</feature>
<feature type="modified residue" description="Phosphoserine" evidence="3">
    <location>
        <position position="301"/>
    </location>
</feature>
<feature type="cross-link" description="Glycyl lysine isopeptide (Lys-Gly) (interchain with G-Cter in SUMO1)" evidence="3">
    <location>
        <position position="345"/>
    </location>
</feature>
<evidence type="ECO:0000250" key="1"/>
<evidence type="ECO:0000250" key="2">
    <source>
        <dbReference type="UniProtKB" id="P40124"/>
    </source>
</evidence>
<evidence type="ECO:0000250" key="3">
    <source>
        <dbReference type="UniProtKB" id="Q01518"/>
    </source>
</evidence>
<evidence type="ECO:0000255" key="4">
    <source>
        <dbReference type="PROSITE-ProRule" id="PRU00659"/>
    </source>
</evidence>
<evidence type="ECO:0000256" key="5">
    <source>
        <dbReference type="SAM" id="MobiDB-lite"/>
    </source>
</evidence>
<evidence type="ECO:0000305" key="6"/>
<reference key="1">
    <citation type="submission" date="2005-08" db="EMBL/GenBank/DDBJ databases">
        <authorList>
            <consortium name="NIH - Mammalian Gene Collection (MGC) project"/>
        </authorList>
    </citation>
    <scope>NUCLEOTIDE SEQUENCE [LARGE SCALE MRNA]</scope>
    <source>
        <strain>Crossbred X Angus</strain>
        <tissue>Ileum</tissue>
    </source>
</reference>